<name>GMCH_MALS4</name>
<protein>
    <recommendedName>
        <fullName evidence="7">GMC oxidoreductase family protein Mala s 12</fullName>
        <ecNumber evidence="7">1.-.-.-</ecNumber>
    </recommendedName>
    <allergenName evidence="7">Mala s 12</allergenName>
</protein>
<reference key="1">
    <citation type="journal article" date="2013" name="MBio">
        <title>Genomic insights into the atopic eczema-associated skin commensal yeast Malassezia sympodialis.</title>
        <authorList>
            <person name="Gioti A."/>
            <person name="Nystedt B."/>
            <person name="Li W."/>
            <person name="Xu J."/>
            <person name="Andersson A."/>
            <person name="Averette A.F."/>
            <person name="Muench K."/>
            <person name="Wang X."/>
            <person name="Kappauf C."/>
            <person name="Kingsbury J.M."/>
            <person name="Kraak B."/>
            <person name="Walker L.A."/>
            <person name="Johansson H.J."/>
            <person name="Holm T."/>
            <person name="Lehtioe J."/>
            <person name="Stajich J.E."/>
            <person name="Mieczkowski P."/>
            <person name="Kahmann R."/>
            <person name="Kennell J.C."/>
            <person name="Cardenas M.E."/>
            <person name="Lundeberg J."/>
            <person name="Saunders C.W."/>
            <person name="Boekhout T."/>
            <person name="Dawson T.L."/>
            <person name="Munro C.A."/>
            <person name="de Groot P.W.J."/>
            <person name="Butler G."/>
            <person name="Heitman J."/>
            <person name="Scheynius A."/>
        </authorList>
    </citation>
    <scope>NUCLEOTIDE SEQUENCE [LARGE SCALE GENOMIC DNA]</scope>
    <source>
        <strain>ATCC 42132</strain>
    </source>
</reference>
<reference evidence="10" key="2">
    <citation type="journal article" date="2017" name="Nucleic Acids Res.">
        <title>Proteogenomics produces comprehensive and highly accurate protein-coding gene annotation in a complete genome assembly of Malassezia sympodialis.</title>
        <authorList>
            <person name="Zhu Y."/>
            <person name="Engstroem P.G."/>
            <person name="Tellgren-Roth C."/>
            <person name="Baudo C.D."/>
            <person name="Kennell J.C."/>
            <person name="Sun S."/>
            <person name="Billmyre R.B."/>
            <person name="Schroeder M.S."/>
            <person name="Andersson A."/>
            <person name="Holm T."/>
            <person name="Sigurgeirsson B."/>
            <person name="Wu G."/>
            <person name="Sankaranarayanan S.R."/>
            <person name="Siddharthan R."/>
            <person name="Sanyal K."/>
            <person name="Lundeberg J."/>
            <person name="Nystedt B."/>
            <person name="Boekhout T."/>
            <person name="Dawson T.L. Jr."/>
            <person name="Heitman J."/>
            <person name="Scheynius A."/>
            <person name="Lehtioe J."/>
        </authorList>
    </citation>
    <scope>NUCLEOTIDE SEQUENCE [LARGE SCALE GENOMIC DNA]</scope>
    <scope>GENOME REANNOTATION</scope>
    <source>
        <strain>ATCC 42132</strain>
    </source>
</reference>
<reference key="3">
    <citation type="journal article" date="2006" name="Allergy">
        <title>Higher pH level, corresponding to that on the skin of patients with atopic eczema, stimulates the release of Malassezia sympodialis allergens.</title>
        <authorList>
            <person name="Selander C."/>
            <person name="Zargari A."/>
            <person name="Moellby R."/>
            <person name="Rasool O."/>
            <person name="Scheynius A."/>
        </authorList>
    </citation>
    <scope>SUBCELLULAR LOCATION</scope>
    <scope>INDUCTION</scope>
    <scope>ALLERGEN</scope>
</reference>
<gene>
    <name evidence="8" type="ORF">MSY001_2108</name>
    <name evidence="9" type="ORF">MSYG_3072</name>
</gene>
<sequence>MKGIVSWAVVSAALVLSATESLAFANVSSFEKRTTTGNGWDLDGKSYDYVIVGGGTAGLVLANRLSANQGTTVAVIEAGNSGYDDNDKFVVPDANLYNSAVNTQYDWQFHTSSQKHMNNRRASWPRGKVLGGSSAVNGLYYVRPSETEVNVWSKLAGGSGRWSWNSLLSGMKKSEHFRGPVKSVQNQLQIQYNAGSHGSNGPIGTTWPAVTYDPVERFIKTADSMSGAINNDPYNGNNHGTYVALSSIDKTNWQRSFSRNGYLDPISKRSNLHVLTGHTVTGIIFDRSGKNAQATGVHYAASSNEASHTVHANKEVIISGGAINSPQILQLSGIGDKNLLNGLGIDVVVDLPGVGENLQDHVSAGMSFKPKNKKDAGPTSVTGDAKADSYVNSAVSYTSLGKLFNNKDSILGKIQARAKQIADSHNVSPAVKQGQSKAYNALADTIFPSKVSPVEILGNVMFGSISIQAALQHPLSRGSIKITSKDPFAYPKINPNYFAENLDLVLLREGFKLIREMSQQSPLKDVIDFETVPGDKVQTNEDWENWIRSAAGTEYHPSSTCAMLPRGDGGVVDENLKVYGTSNLRVVDASVTPIAMSCHLESVVYGLAEVAADIILGN</sequence>
<dbReference type="EC" id="1.-.-.-" evidence="7"/>
<dbReference type="EMBL" id="HE999557">
    <property type="protein sequence ID" value="CCU99402.1"/>
    <property type="molecule type" value="Genomic_DNA"/>
</dbReference>
<dbReference type="EMBL" id="LT671824">
    <property type="protein sequence ID" value="SHO78725.1"/>
    <property type="molecule type" value="Genomic_DNA"/>
</dbReference>
<dbReference type="SMR" id="M5EAX2"/>
<dbReference type="STRING" id="1230383.M5EAX2"/>
<dbReference type="Allergome" id="2530">
    <property type="allergen name" value="Mala s 12"/>
</dbReference>
<dbReference type="KEGG" id="msym:MSY001_2108"/>
<dbReference type="VEuPathDB" id="FungiDB:MSYG_3072"/>
<dbReference type="HOGENOM" id="CLU_002865_6_0_1"/>
<dbReference type="OrthoDB" id="269227at2759"/>
<dbReference type="Proteomes" id="UP000186303">
    <property type="component" value="Chromosome 4"/>
</dbReference>
<dbReference type="GO" id="GO:0005576">
    <property type="term" value="C:extracellular region"/>
    <property type="evidence" value="ECO:0007669"/>
    <property type="project" value="UniProtKB-SubCell"/>
</dbReference>
<dbReference type="GO" id="GO:0050660">
    <property type="term" value="F:flavin adenine dinucleotide binding"/>
    <property type="evidence" value="ECO:0007669"/>
    <property type="project" value="InterPro"/>
</dbReference>
<dbReference type="GO" id="GO:0016614">
    <property type="term" value="F:oxidoreductase activity, acting on CH-OH group of donors"/>
    <property type="evidence" value="ECO:0007669"/>
    <property type="project" value="InterPro"/>
</dbReference>
<dbReference type="Gene3D" id="3.50.50.60">
    <property type="entry name" value="FAD/NAD(P)-binding domain"/>
    <property type="match status" value="1"/>
</dbReference>
<dbReference type="Gene3D" id="4.10.450.10">
    <property type="entry name" value="Glucose Oxidase, domain 2"/>
    <property type="match status" value="1"/>
</dbReference>
<dbReference type="Gene3D" id="3.30.560.10">
    <property type="entry name" value="Glucose Oxidase, domain 3"/>
    <property type="match status" value="1"/>
</dbReference>
<dbReference type="InterPro" id="IPR036188">
    <property type="entry name" value="FAD/NAD-bd_sf"/>
</dbReference>
<dbReference type="InterPro" id="IPR027424">
    <property type="entry name" value="Glucose_Oxidase_domain_2"/>
</dbReference>
<dbReference type="InterPro" id="IPR012132">
    <property type="entry name" value="GMC_OxRdtase"/>
</dbReference>
<dbReference type="InterPro" id="IPR000172">
    <property type="entry name" value="GMC_OxRdtase_N"/>
</dbReference>
<dbReference type="InterPro" id="IPR007867">
    <property type="entry name" value="GMC_OxRtase_C"/>
</dbReference>
<dbReference type="PANTHER" id="PTHR11552">
    <property type="entry name" value="GLUCOSE-METHANOL-CHOLINE GMC OXIDOREDUCTASE"/>
    <property type="match status" value="1"/>
</dbReference>
<dbReference type="PANTHER" id="PTHR11552:SF218">
    <property type="entry name" value="GLUCOSE-METHANOL-CHOLINE OXIDOREDUCTASE N-TERMINAL DOMAIN-CONTAINING PROTEIN"/>
    <property type="match status" value="1"/>
</dbReference>
<dbReference type="Pfam" id="PF05199">
    <property type="entry name" value="GMC_oxred_C"/>
    <property type="match status" value="1"/>
</dbReference>
<dbReference type="Pfam" id="PF00732">
    <property type="entry name" value="GMC_oxred_N"/>
    <property type="match status" value="1"/>
</dbReference>
<dbReference type="PIRSF" id="PIRSF000137">
    <property type="entry name" value="Alcohol_oxidase"/>
    <property type="match status" value="1"/>
</dbReference>
<dbReference type="SUPFAM" id="SSF54373">
    <property type="entry name" value="FAD-linked reductases, C-terminal domain"/>
    <property type="match status" value="1"/>
</dbReference>
<dbReference type="SUPFAM" id="SSF51905">
    <property type="entry name" value="FAD/NAD(P)-binding domain"/>
    <property type="match status" value="1"/>
</dbReference>
<dbReference type="PROSITE" id="PS00623">
    <property type="entry name" value="GMC_OXRED_1"/>
    <property type="match status" value="1"/>
</dbReference>
<dbReference type="PROSITE" id="PS00624">
    <property type="entry name" value="GMC_OXRED_2"/>
    <property type="match status" value="1"/>
</dbReference>
<feature type="signal peptide" evidence="2">
    <location>
        <begin position="1"/>
        <end position="23"/>
    </location>
</feature>
<feature type="chain" id="PRO_5015096524" description="GMC oxidoreductase family protein Mala s 12" evidence="2">
    <location>
        <begin position="24"/>
        <end position="618"/>
    </location>
</feature>
<feature type="active site" description="Proton donor" evidence="3">
    <location>
        <position position="556"/>
    </location>
</feature>
<feature type="active site" description="Proton acceptor" evidence="3">
    <location>
        <position position="599"/>
    </location>
</feature>
<feature type="binding site" evidence="4">
    <location>
        <position position="129"/>
    </location>
    <ligand>
        <name>FAD</name>
        <dbReference type="ChEBI" id="CHEBI:57692"/>
    </ligand>
</feature>
<feature type="binding site" evidence="4">
    <location>
        <position position="280"/>
    </location>
    <ligand>
        <name>FAD</name>
        <dbReference type="ChEBI" id="CHEBI:57692"/>
    </ligand>
</feature>
<comment type="cofactor">
    <cofactor evidence="4">
        <name>FAD</name>
        <dbReference type="ChEBI" id="CHEBI:57692"/>
    </cofactor>
    <text evidence="1">Binds 1 FAD per subunit.</text>
</comment>
<comment type="subunit">
    <text evidence="1">Monomer.</text>
</comment>
<comment type="subcellular location">
    <subcellularLocation>
        <location evidence="6">Secreted</location>
    </subcellularLocation>
</comment>
<comment type="induction">
    <text evidence="6">By alkaline pH. Expressed 12 times higher in tube cultivation grown at pH 6.1 for 2 days compared with cells cultured at pH 5.5. However, at day 4, the levels were equal at both pH values. In the fermentor cultivations, expressed 32 times more at pH 6.1 than at pH 5.0 after 24 h. At 48 h, the expression level was nine times higher at the higher pH.</text>
</comment>
<comment type="allergen">
    <text evidence="6">Causes an allergic reaction in human. Binds to IgE. The skin barrier with higher pH level in atopic eczema patients seems to provide an environment that can enhance the release of this allergen from M.sympodialis, which can contribute to the inflammation.</text>
</comment>
<comment type="similarity">
    <text evidence="5">Belongs to the GMC oxidoreductase family.</text>
</comment>
<organism>
    <name type="scientific">Malassezia sympodialis (strain ATCC 42132)</name>
    <name type="common">Atopic eczema-associated yeast</name>
    <dbReference type="NCBI Taxonomy" id="1230383"/>
    <lineage>
        <taxon>Eukaryota</taxon>
        <taxon>Fungi</taxon>
        <taxon>Dikarya</taxon>
        <taxon>Basidiomycota</taxon>
        <taxon>Ustilaginomycotina</taxon>
        <taxon>Malasseziomycetes</taxon>
        <taxon>Malasseziales</taxon>
        <taxon>Malasseziaceae</taxon>
        <taxon>Malassezia</taxon>
    </lineage>
</organism>
<evidence type="ECO:0000250" key="1">
    <source>
        <dbReference type="UniProtKB" id="Q5GMY3"/>
    </source>
</evidence>
<evidence type="ECO:0000255" key="2"/>
<evidence type="ECO:0000255" key="3">
    <source>
        <dbReference type="PIRSR" id="PIRSR000137-1"/>
    </source>
</evidence>
<evidence type="ECO:0000255" key="4">
    <source>
        <dbReference type="PIRSR" id="PIRSR000137-2"/>
    </source>
</evidence>
<evidence type="ECO:0000255" key="5">
    <source>
        <dbReference type="RuleBase" id="RU003968"/>
    </source>
</evidence>
<evidence type="ECO:0000269" key="6">
    <source>
    </source>
</evidence>
<evidence type="ECO:0000305" key="7"/>
<evidence type="ECO:0000312" key="8">
    <source>
        <dbReference type="EMBL" id="CCU99402.1"/>
    </source>
</evidence>
<evidence type="ECO:0000312" key="9">
    <source>
        <dbReference type="EMBL" id="SHO78725.1"/>
    </source>
</evidence>
<evidence type="ECO:0000312" key="10">
    <source>
        <dbReference type="Proteomes" id="UP000186303"/>
    </source>
</evidence>
<keyword id="KW-0020">Allergen</keyword>
<keyword id="KW-0274">FAD</keyword>
<keyword id="KW-0285">Flavoprotein</keyword>
<keyword id="KW-0560">Oxidoreductase</keyword>
<keyword id="KW-1185">Reference proteome</keyword>
<keyword id="KW-0964">Secreted</keyword>
<keyword id="KW-0732">Signal</keyword>
<accession>M5EAX2</accession>
<proteinExistence type="evidence at protein level"/>